<sequence length="219" mass="24180">MIAPQPISRTLPRWQRIVALTMIGISTALIGGCTMDHNPDTSRRLTGEQKIQLIDSMRNKGSYEAARERLTATARIIADRVSAAIPGQTWKFDDDPNIQQSDRNGALCDKLTADIARRPIANSVMFGATFSAEDFKIAANIVREEAAKYGATTESSLFNESAKRDYDVQGNGYEFRLLQIKFATLNITGDCFLLQKVLDLPAGQLPPEPPIWPTTSTPH</sequence>
<feature type="signal peptide" evidence="1">
    <location>
        <begin position="1"/>
        <end position="32"/>
    </location>
</feature>
<feature type="chain" id="PRO_0000427700" description="Putative lipoprotein LppA">
    <location>
        <begin position="33"/>
        <end position="219"/>
    </location>
</feature>
<feature type="lipid moiety-binding region" description="N-palmitoyl cysteine" evidence="1">
    <location>
        <position position="33"/>
    </location>
</feature>
<feature type="lipid moiety-binding region" description="S-diacylglycerol cysteine" evidence="1">
    <location>
        <position position="33"/>
    </location>
</feature>
<comment type="subcellular location">
    <subcellularLocation>
        <location evidence="2">Cell membrane</location>
        <topology evidence="2">Lipid-anchor</topology>
    </subcellularLocation>
</comment>
<comment type="similarity">
    <text evidence="2">Belongs to the mycobacteriales LppA/LppB family.</text>
</comment>
<name>LPPA_MYCTO</name>
<proteinExistence type="inferred from homology"/>
<dbReference type="EMBL" id="AE000516">
    <property type="protein sequence ID" value="AAK46929.1"/>
    <property type="molecule type" value="Genomic_DNA"/>
</dbReference>
<dbReference type="PIR" id="C70659">
    <property type="entry name" value="C70659"/>
</dbReference>
<dbReference type="RefSeq" id="WP_003900846.1">
    <property type="nucleotide sequence ID" value="NZ_KK341227.1"/>
</dbReference>
<dbReference type="SMR" id="P9WK80"/>
<dbReference type="KEGG" id="mtc:MT2618"/>
<dbReference type="PATRIC" id="fig|83331.31.peg.2824"/>
<dbReference type="HOGENOM" id="CLU_097903_0_0_11"/>
<dbReference type="Proteomes" id="UP000001020">
    <property type="component" value="Chromosome"/>
</dbReference>
<dbReference type="GO" id="GO:0005886">
    <property type="term" value="C:plasma membrane"/>
    <property type="evidence" value="ECO:0007669"/>
    <property type="project" value="UniProtKB-SubCell"/>
</dbReference>
<dbReference type="Gene3D" id="3.30.2030.20">
    <property type="match status" value="1"/>
</dbReference>
<dbReference type="InterPro" id="IPR032018">
    <property type="entry name" value="LppA/LppB/LprP"/>
</dbReference>
<dbReference type="Pfam" id="PF16708">
    <property type="entry name" value="LppA"/>
    <property type="match status" value="1"/>
</dbReference>
<gene>
    <name type="primary">lppA</name>
    <name type="ordered locus">MT2618</name>
</gene>
<reference key="1">
    <citation type="journal article" date="2002" name="J. Bacteriol.">
        <title>Whole-genome comparison of Mycobacterium tuberculosis clinical and laboratory strains.</title>
        <authorList>
            <person name="Fleischmann R.D."/>
            <person name="Alland D."/>
            <person name="Eisen J.A."/>
            <person name="Carpenter L."/>
            <person name="White O."/>
            <person name="Peterson J.D."/>
            <person name="DeBoy R.T."/>
            <person name="Dodson R.J."/>
            <person name="Gwinn M.L."/>
            <person name="Haft D.H."/>
            <person name="Hickey E.K."/>
            <person name="Kolonay J.F."/>
            <person name="Nelson W.C."/>
            <person name="Umayam L.A."/>
            <person name="Ermolaeva M.D."/>
            <person name="Salzberg S.L."/>
            <person name="Delcher A."/>
            <person name="Utterback T.R."/>
            <person name="Weidman J.F."/>
            <person name="Khouri H.M."/>
            <person name="Gill J."/>
            <person name="Mikula A."/>
            <person name="Bishai W."/>
            <person name="Jacobs W.R. Jr."/>
            <person name="Venter J.C."/>
            <person name="Fraser C.M."/>
        </authorList>
    </citation>
    <scope>NUCLEOTIDE SEQUENCE [LARGE SCALE GENOMIC DNA]</scope>
    <source>
        <strain>CDC 1551 / Oshkosh</strain>
    </source>
</reference>
<evidence type="ECO:0000255" key="1"/>
<evidence type="ECO:0000305" key="2"/>
<accession>P9WK80</accession>
<accession>L0TCP2</accession>
<accession>P95010</accession>
<accession>Q7D6Y4</accession>
<protein>
    <recommendedName>
        <fullName>Putative lipoprotein LppA</fullName>
    </recommendedName>
</protein>
<keyword id="KW-1003">Cell membrane</keyword>
<keyword id="KW-0449">Lipoprotein</keyword>
<keyword id="KW-0472">Membrane</keyword>
<keyword id="KW-0564">Palmitate</keyword>
<keyword id="KW-1185">Reference proteome</keyword>
<keyword id="KW-0732">Signal</keyword>
<organism>
    <name type="scientific">Mycobacterium tuberculosis (strain CDC 1551 / Oshkosh)</name>
    <dbReference type="NCBI Taxonomy" id="83331"/>
    <lineage>
        <taxon>Bacteria</taxon>
        <taxon>Bacillati</taxon>
        <taxon>Actinomycetota</taxon>
        <taxon>Actinomycetes</taxon>
        <taxon>Mycobacteriales</taxon>
        <taxon>Mycobacteriaceae</taxon>
        <taxon>Mycobacterium</taxon>
        <taxon>Mycobacterium tuberculosis complex</taxon>
    </lineage>
</organism>